<dbReference type="EMBL" id="CH981524">
    <property type="protein sequence ID" value="EDK43104.1"/>
    <property type="molecule type" value="Genomic_DNA"/>
</dbReference>
<dbReference type="RefSeq" id="XP_001528762.1">
    <property type="nucleotide sequence ID" value="XM_001528712.1"/>
</dbReference>
<dbReference type="GeneID" id="5235696"/>
<dbReference type="KEGG" id="lel:PVL30_001254"/>
<dbReference type="VEuPathDB" id="FungiDB:LELG_01282"/>
<dbReference type="eggNOG" id="ENOG502QR67">
    <property type="taxonomic scope" value="Eukaryota"/>
</dbReference>
<dbReference type="HOGENOM" id="CLU_039216_0_0_1"/>
<dbReference type="InParanoid" id="A5DV96"/>
<dbReference type="OMA" id="EFEMVWL"/>
<dbReference type="OrthoDB" id="4087899at2759"/>
<dbReference type="Proteomes" id="UP000001996">
    <property type="component" value="Unassembled WGS sequence"/>
</dbReference>
<dbReference type="GO" id="GO:0005743">
    <property type="term" value="C:mitochondrial inner membrane"/>
    <property type="evidence" value="ECO:0007669"/>
    <property type="project" value="UniProtKB-SubCell"/>
</dbReference>
<dbReference type="InterPro" id="IPR013911">
    <property type="entry name" value="i-AAA_Mgr1"/>
</dbReference>
<dbReference type="Pfam" id="PF08602">
    <property type="entry name" value="Mgr1"/>
    <property type="match status" value="1"/>
</dbReference>
<gene>
    <name type="primary">MGR1</name>
    <name type="ORF">LELG_01282</name>
</gene>
<proteinExistence type="inferred from homology"/>
<protein>
    <recommendedName>
        <fullName>Mitochondrial inner membrane i-AAA protease complex subunit MGR1</fullName>
    </recommendedName>
</protein>
<sequence length="406" mass="45636">MGYIPPPGDNDDNGKKSNKKTQNTSKPISSDSTPDGTTITIINPMSLIPRNPSFGLIWGPLTPASDNRPAMYTMVALQIAIGVRFFRYARTHLRRHPVPQAQFHAPPGLGVNSMISTTANQTYSAPPQQFLRRSKGDVFKSILAITTGSLLIFGSGLEIARMMLPYDPWYDEAQFYRKQAVRNGDKPNFWFGAYQYYQPMTYKEWHSKVSKWIDSVEKEIKVDETTFVIDKDGKARGGIGPAGVGYVNGAGQQSGAASAAAAVAKPLFQIRNRAKYQQIHAKLYNANETRMRELLANELNDTNVNELNKAERLDKILEGKSDLVNPNFNKPSISLGNHPMESDDEFEMVWLNFEPWDELKMETDYDIRLIPRYASVEELEQVDEGELFVVKKEELGETDNVVNESS</sequence>
<keyword id="KW-0472">Membrane</keyword>
<keyword id="KW-0496">Mitochondrion</keyword>
<keyword id="KW-0999">Mitochondrion inner membrane</keyword>
<keyword id="KW-1185">Reference proteome</keyword>
<keyword id="KW-0812">Transmembrane</keyword>
<keyword id="KW-1133">Transmembrane helix</keyword>
<organism>
    <name type="scientific">Lodderomyces elongisporus (strain ATCC 11503 / CBS 2605 / JCM 1781 / NBRC 1676 / NRRL YB-4239)</name>
    <name type="common">Yeast</name>
    <name type="synonym">Saccharomyces elongisporus</name>
    <dbReference type="NCBI Taxonomy" id="379508"/>
    <lineage>
        <taxon>Eukaryota</taxon>
        <taxon>Fungi</taxon>
        <taxon>Dikarya</taxon>
        <taxon>Ascomycota</taxon>
        <taxon>Saccharomycotina</taxon>
        <taxon>Pichiomycetes</taxon>
        <taxon>Debaryomycetaceae</taxon>
        <taxon>Candida/Lodderomyces clade</taxon>
        <taxon>Lodderomyces</taxon>
    </lineage>
</organism>
<evidence type="ECO:0000250" key="1"/>
<evidence type="ECO:0000255" key="2"/>
<evidence type="ECO:0000256" key="3">
    <source>
        <dbReference type="SAM" id="MobiDB-lite"/>
    </source>
</evidence>
<evidence type="ECO:0000305" key="4"/>
<comment type="function">
    <text evidence="1">Component of the mitochondrial inner membrane i-AAA protease complex required for mitochondrial inner membrane protein turnover.</text>
</comment>
<comment type="subunit">
    <text evidence="1">Component of the mitochondrial inner membrane i-AAA protease complex.</text>
</comment>
<comment type="subcellular location">
    <subcellularLocation>
        <location evidence="1">Mitochondrion inner membrane</location>
        <topology evidence="1">Multi-pass membrane protein</topology>
    </subcellularLocation>
</comment>
<comment type="similarity">
    <text evidence="4">Belongs to the MGR1 family.</text>
</comment>
<name>MGR1_LODEL</name>
<accession>A5DV96</accession>
<feature type="chain" id="PRO_0000324414" description="Mitochondrial inner membrane i-AAA protease complex subunit MGR1">
    <location>
        <begin position="1"/>
        <end position="406"/>
    </location>
</feature>
<feature type="topological domain" description="Mitochondrial intermembrane" evidence="1">
    <location>
        <begin position="1"/>
        <end position="68"/>
    </location>
</feature>
<feature type="transmembrane region" description="Helical" evidence="2">
    <location>
        <begin position="69"/>
        <end position="86"/>
    </location>
</feature>
<feature type="topological domain" description="Mitochondrial matrix" evidence="1">
    <location>
        <begin position="87"/>
        <end position="137"/>
    </location>
</feature>
<feature type="transmembrane region" description="Helical" evidence="2">
    <location>
        <begin position="138"/>
        <end position="160"/>
    </location>
</feature>
<feature type="topological domain" description="Mitochondrial intermembrane" evidence="1">
    <location>
        <begin position="161"/>
        <end position="406"/>
    </location>
</feature>
<feature type="region of interest" description="Disordered" evidence="3">
    <location>
        <begin position="1"/>
        <end position="36"/>
    </location>
</feature>
<feature type="compositionally biased region" description="Polar residues" evidence="3">
    <location>
        <begin position="27"/>
        <end position="36"/>
    </location>
</feature>
<reference key="1">
    <citation type="journal article" date="2009" name="Nature">
        <title>Evolution of pathogenicity and sexual reproduction in eight Candida genomes.</title>
        <authorList>
            <person name="Butler G."/>
            <person name="Rasmussen M.D."/>
            <person name="Lin M.F."/>
            <person name="Santos M.A.S."/>
            <person name="Sakthikumar S."/>
            <person name="Munro C.A."/>
            <person name="Rheinbay E."/>
            <person name="Grabherr M."/>
            <person name="Forche A."/>
            <person name="Reedy J.L."/>
            <person name="Agrafioti I."/>
            <person name="Arnaud M.B."/>
            <person name="Bates S."/>
            <person name="Brown A.J.P."/>
            <person name="Brunke S."/>
            <person name="Costanzo M.C."/>
            <person name="Fitzpatrick D.A."/>
            <person name="de Groot P.W.J."/>
            <person name="Harris D."/>
            <person name="Hoyer L.L."/>
            <person name="Hube B."/>
            <person name="Klis F.M."/>
            <person name="Kodira C."/>
            <person name="Lennard N."/>
            <person name="Logue M.E."/>
            <person name="Martin R."/>
            <person name="Neiman A.M."/>
            <person name="Nikolaou E."/>
            <person name="Quail M.A."/>
            <person name="Quinn J."/>
            <person name="Santos M.C."/>
            <person name="Schmitzberger F.F."/>
            <person name="Sherlock G."/>
            <person name="Shah P."/>
            <person name="Silverstein K.A.T."/>
            <person name="Skrzypek M.S."/>
            <person name="Soll D."/>
            <person name="Staggs R."/>
            <person name="Stansfield I."/>
            <person name="Stumpf M.P.H."/>
            <person name="Sudbery P.E."/>
            <person name="Srikantha T."/>
            <person name="Zeng Q."/>
            <person name="Berman J."/>
            <person name="Berriman M."/>
            <person name="Heitman J."/>
            <person name="Gow N.A.R."/>
            <person name="Lorenz M.C."/>
            <person name="Birren B.W."/>
            <person name="Kellis M."/>
            <person name="Cuomo C.A."/>
        </authorList>
    </citation>
    <scope>NUCLEOTIDE SEQUENCE [LARGE SCALE GENOMIC DNA]</scope>
    <source>
        <strain>ATCC 11503 / BCRC 21390 / CBS 2605 / JCM 1781 / NBRC 1676 / NRRL YB-4239</strain>
    </source>
</reference>